<comment type="developmental stage">
    <text evidence="2 3">Expressed in the prestalk cells and prespore cells. Expressed only late in development. First detected in the finger stage and expression levels peak in late culmination (18-22 hours). Its expression ceases upon cell disaggregation but is fully restored by exogenous cAMP after a 5 hour delay.</text>
</comment>
<comment type="similarity">
    <text evidence="4">Belongs to the hssA/B family.</text>
</comment>
<feature type="chain" id="PRO_0000064359" description="HssA/B-like protein 33">
    <location>
        <begin position="1"/>
        <end position="98"/>
    </location>
</feature>
<feature type="region of interest" description="Disordered" evidence="1">
    <location>
        <begin position="1"/>
        <end position="29"/>
    </location>
</feature>
<feature type="region of interest" description="Disordered" evidence="1">
    <location>
        <begin position="60"/>
        <end position="98"/>
    </location>
</feature>
<feature type="compositionally biased region" description="Gly residues" evidence="1">
    <location>
        <begin position="60"/>
        <end position="72"/>
    </location>
</feature>
<feature type="compositionally biased region" description="Basic residues" evidence="1">
    <location>
        <begin position="73"/>
        <end position="88"/>
    </location>
</feature>
<feature type="compositionally biased region" description="Gly residues" evidence="1">
    <location>
        <begin position="89"/>
        <end position="98"/>
    </location>
</feature>
<gene>
    <name type="primary">hssl33</name>
    <name type="synonym">2C</name>
    <name type="ORF">DDB_G0280847</name>
</gene>
<organism>
    <name type="scientific">Dictyostelium discoideum</name>
    <name type="common">Social amoeba</name>
    <dbReference type="NCBI Taxonomy" id="44689"/>
    <lineage>
        <taxon>Eukaryota</taxon>
        <taxon>Amoebozoa</taxon>
        <taxon>Evosea</taxon>
        <taxon>Eumycetozoa</taxon>
        <taxon>Dictyostelia</taxon>
        <taxon>Dictyosteliales</taxon>
        <taxon>Dictyosteliaceae</taxon>
        <taxon>Dictyostelium</taxon>
    </lineage>
</organism>
<accession>P15648</accession>
<accession>Q54UR5</accession>
<keyword id="KW-1185">Reference proteome</keyword>
<protein>
    <recommendedName>
        <fullName>HssA/B-like protein 33</fullName>
    </recommendedName>
    <alternativeName>
        <fullName>Protein 2C</fullName>
    </alternativeName>
</protein>
<proteinExistence type="evidence at transcript level"/>
<dbReference type="EMBL" id="X16827">
    <property type="protein sequence ID" value="CAA34727.1"/>
    <property type="molecule type" value="mRNA"/>
</dbReference>
<dbReference type="EMBL" id="AAFI02000039">
    <property type="protein sequence ID" value="EAL66965.1"/>
    <property type="molecule type" value="Genomic_DNA"/>
</dbReference>
<dbReference type="EMBL" id="AU037627">
    <property type="status" value="NOT_ANNOTATED_CDS"/>
    <property type="molecule type" value="mRNA"/>
</dbReference>
<dbReference type="EMBL" id="AU060838">
    <property type="status" value="NOT_ANNOTATED_CDS"/>
    <property type="molecule type" value="mRNA"/>
</dbReference>
<dbReference type="EMBL" id="BJ371106">
    <property type="status" value="NOT_ANNOTATED_CDS"/>
    <property type="molecule type" value="mRNA"/>
</dbReference>
<dbReference type="EMBL" id="BJ397827">
    <property type="status" value="NOT_ANNOTATED_CDS"/>
    <property type="molecule type" value="mRNA"/>
</dbReference>
<dbReference type="PIR" id="S08137">
    <property type="entry name" value="S08137"/>
</dbReference>
<dbReference type="RefSeq" id="XP_640956.1">
    <property type="nucleotide sequence ID" value="XM_635864.1"/>
</dbReference>
<dbReference type="STRING" id="44689.P15648"/>
<dbReference type="PaxDb" id="44689-DDB0216182"/>
<dbReference type="EnsemblProtists" id="EAL66965">
    <property type="protein sequence ID" value="EAL66965"/>
    <property type="gene ID" value="DDB_G0280847"/>
</dbReference>
<dbReference type="GeneID" id="8622760"/>
<dbReference type="KEGG" id="ddi:DDB_G0280847"/>
<dbReference type="dictyBase" id="DDB_G0280847">
    <property type="gene designation" value="2C"/>
</dbReference>
<dbReference type="HOGENOM" id="CLU_181850_0_0_1"/>
<dbReference type="InParanoid" id="P15648"/>
<dbReference type="PRO" id="PR:P15648"/>
<dbReference type="Proteomes" id="UP000002195">
    <property type="component" value="Chromosome 3"/>
</dbReference>
<dbReference type="GO" id="GO:0031154">
    <property type="term" value="P:culmination involved in sorocarp development"/>
    <property type="evidence" value="ECO:0000270"/>
    <property type="project" value="UniProtKB"/>
</dbReference>
<dbReference type="GO" id="GO:0031153">
    <property type="term" value="P:slug development involved in sorocarp development"/>
    <property type="evidence" value="ECO:0000270"/>
    <property type="project" value="UniProtKB"/>
</dbReference>
<dbReference type="GO" id="GO:0030587">
    <property type="term" value="P:sorocarp development"/>
    <property type="evidence" value="ECO:0000318"/>
    <property type="project" value="GO_Central"/>
</dbReference>
<dbReference type="InterPro" id="IPR008455">
    <property type="entry name" value="HssA/B-related"/>
</dbReference>
<dbReference type="Pfam" id="PF05710">
    <property type="entry name" value="Coiled"/>
    <property type="match status" value="1"/>
</dbReference>
<sequence length="98" mass="8836">MTLFSSISSMSSSMTSSRSSFSSFGSGTSMGSNSIACSVGSGGGGCGSGSGGCGDLTGGAKSSGGSCGGKGGPHNHGHGNGHGPHGHGGKGSGGSCSC</sequence>
<reference key="1">
    <citation type="journal article" date="1990" name="Mol. Microbiol.">
        <title>Two cyclic AMP-regulated genes from Dictyostelium discoideum encode homologous proteins.</title>
        <authorList>
            <person name="Ramji D.P."/>
            <person name="Richards A.J."/>
            <person name="Jagger P."/>
            <person name="Bleasby A."/>
            <person name="Hames B.D."/>
        </authorList>
    </citation>
    <scope>NUCLEOTIDE SEQUENCE [MRNA]</scope>
    <source>
        <strain>AX2</strain>
    </source>
</reference>
<reference key="2">
    <citation type="journal article" date="2005" name="Nature">
        <title>The genome of the social amoeba Dictyostelium discoideum.</title>
        <authorList>
            <person name="Eichinger L."/>
            <person name="Pachebat J.A."/>
            <person name="Gloeckner G."/>
            <person name="Rajandream M.A."/>
            <person name="Sucgang R."/>
            <person name="Berriman M."/>
            <person name="Song J."/>
            <person name="Olsen R."/>
            <person name="Szafranski K."/>
            <person name="Xu Q."/>
            <person name="Tunggal B."/>
            <person name="Kummerfeld S."/>
            <person name="Madera M."/>
            <person name="Konfortov B.A."/>
            <person name="Rivero F."/>
            <person name="Bankier A.T."/>
            <person name="Lehmann R."/>
            <person name="Hamlin N."/>
            <person name="Davies R."/>
            <person name="Gaudet P."/>
            <person name="Fey P."/>
            <person name="Pilcher K."/>
            <person name="Chen G."/>
            <person name="Saunders D."/>
            <person name="Sodergren E.J."/>
            <person name="Davis P."/>
            <person name="Kerhornou A."/>
            <person name="Nie X."/>
            <person name="Hall N."/>
            <person name="Anjard C."/>
            <person name="Hemphill L."/>
            <person name="Bason N."/>
            <person name="Farbrother P."/>
            <person name="Desany B."/>
            <person name="Just E."/>
            <person name="Morio T."/>
            <person name="Rost R."/>
            <person name="Churcher C.M."/>
            <person name="Cooper J."/>
            <person name="Haydock S."/>
            <person name="van Driessche N."/>
            <person name="Cronin A."/>
            <person name="Goodhead I."/>
            <person name="Muzny D.M."/>
            <person name="Mourier T."/>
            <person name="Pain A."/>
            <person name="Lu M."/>
            <person name="Harper D."/>
            <person name="Lindsay R."/>
            <person name="Hauser H."/>
            <person name="James K.D."/>
            <person name="Quiles M."/>
            <person name="Madan Babu M."/>
            <person name="Saito T."/>
            <person name="Buchrieser C."/>
            <person name="Wardroper A."/>
            <person name="Felder M."/>
            <person name="Thangavelu M."/>
            <person name="Johnson D."/>
            <person name="Knights A."/>
            <person name="Loulseged H."/>
            <person name="Mungall K.L."/>
            <person name="Oliver K."/>
            <person name="Price C."/>
            <person name="Quail M.A."/>
            <person name="Urushihara H."/>
            <person name="Hernandez J."/>
            <person name="Rabbinowitsch E."/>
            <person name="Steffen D."/>
            <person name="Sanders M."/>
            <person name="Ma J."/>
            <person name="Kohara Y."/>
            <person name="Sharp S."/>
            <person name="Simmonds M.N."/>
            <person name="Spiegler S."/>
            <person name="Tivey A."/>
            <person name="Sugano S."/>
            <person name="White B."/>
            <person name="Walker D."/>
            <person name="Woodward J.R."/>
            <person name="Winckler T."/>
            <person name="Tanaka Y."/>
            <person name="Shaulsky G."/>
            <person name="Schleicher M."/>
            <person name="Weinstock G.M."/>
            <person name="Rosenthal A."/>
            <person name="Cox E.C."/>
            <person name="Chisholm R.L."/>
            <person name="Gibbs R.A."/>
            <person name="Loomis W.F."/>
            <person name="Platzer M."/>
            <person name="Kay R.R."/>
            <person name="Williams J.G."/>
            <person name="Dear P.H."/>
            <person name="Noegel A.A."/>
            <person name="Barrell B.G."/>
            <person name="Kuspa A."/>
        </authorList>
    </citation>
    <scope>NUCLEOTIDE SEQUENCE [LARGE SCALE GENOMIC DNA]</scope>
    <source>
        <strain>AX4</strain>
    </source>
</reference>
<reference key="3">
    <citation type="journal article" date="2004" name="Nucleic Acids Res.">
        <title>Analyses of cDNAs from growth and slug stages of Dictyostelium discoideum.</title>
        <authorList>
            <person name="Urushihara H."/>
            <person name="Morio T."/>
            <person name="Saito T."/>
            <person name="Kohara Y."/>
            <person name="Koriki E."/>
            <person name="Ochiai H."/>
            <person name="Maeda M."/>
            <person name="Williams J.G."/>
            <person name="Takeuchi I."/>
            <person name="Tanaka Y."/>
        </authorList>
    </citation>
    <scope>NUCLEOTIDE SEQUENCE [LARGE SCALE MRNA]</scope>
    <source>
        <strain>AX4</strain>
    </source>
</reference>
<reference key="4">
    <citation type="journal article" date="1990" name="Mol. Microbiol.">
        <title>Developmental regulation of cell-type-enriched mRNAs in Dictyostelium discoideum.</title>
        <authorList>
            <person name="Corney A.J."/>
            <person name="Richards A.J."/>
            <person name="Phillpots T."/>
            <person name="Hames B.D."/>
        </authorList>
    </citation>
    <scope>DEVELOPMENTAL STAGE</scope>
</reference>
<reference key="5">
    <citation type="journal article" date="1990" name="Mol. Microbiol.">
        <title>Cell-type-specific genes expressed late in Dictyostelium development show markedly different responses to 3'5' cyclic AMP.</title>
        <authorList>
            <person name="Richards A.J."/>
            <person name="Corney A.J."/>
            <person name="Hames B.D."/>
        </authorList>
    </citation>
    <scope>DEVELOPMENTAL STAGE</scope>
</reference>
<evidence type="ECO:0000256" key="1">
    <source>
        <dbReference type="SAM" id="MobiDB-lite"/>
    </source>
</evidence>
<evidence type="ECO:0000269" key="2">
    <source>
    </source>
</evidence>
<evidence type="ECO:0000269" key="3">
    <source>
    </source>
</evidence>
<evidence type="ECO:0000305" key="4"/>
<name>HSL33_DICDI</name>